<sequence>MSRSESKKNRGGREEVLEQWVAGRRKQEELERDLRKTKKKIKKLEEENPWLGNIKGILGKKDKDGEGAPPAKRARTDRMEVDSGPRKRPLRGGFTDKERQDHRRRKALENKKKQLGAGGKNLSREEEEELRRLTEEDERRERRVAGPPPGGVNPLEGGSRGAPGGGFVPNMQGVPESPFTRTGEGLDVRGDRGFP</sequence>
<comment type="function">
    <text evidence="1">Promotes both transcription and replication of genomic RNA. Following virus entry into host cell, provides nuclear import of HDV RNPs thanks to its nuclear localization signal. May interact with host RNA polymerase II thereby changing its template requirement from DNA to RNA. RNA pol II complex would then acts as an RNA-directed RNA polymerase, and transcribe and replicate HDV genome (By similarity).</text>
</comment>
<comment type="subunit">
    <text evidence="1">Homodimer. Homooctamer. Interacts with host RNA polymerase II complex, and with host NPM1.</text>
</comment>
<comment type="subcellular location">
    <subcellularLocation>
        <location>Virion</location>
    </subcellularLocation>
    <subcellularLocation>
        <location evidence="1">Host nucleus</location>
    </subcellularLocation>
</comment>
<comment type="PTM">
    <text evidence="1">Phosphorylated at serines and threonines by host MAPK1/3, PKR, and CK2.</text>
</comment>
<comment type="PTM">
    <text evidence="1">Acetylation modulates nuclear localization. Neo-synthesized genomic RNA migrates from the nucleus to the cytoplasm, where they interact with S-HDAg, which once acetylated redirect both partners to the nucleus (By similarity).</text>
</comment>
<comment type="PTM">
    <text evidence="1">Methylation plays a role in viral genome replication.</text>
</comment>
<comment type="RNA editing">
    <location>
        <position position="196" evidence="6"/>
    </location>
    <text evidence="1">Partially edited. RNA editing at this position occurs on the antigenomic strand and consists of a conversion of A to G catalyzed by the cellular enzyme ADAR1. The unedited RNA version gives rise to the small delta antigen, which ends with a nonsense codon at position 196. In the edited version, this amber codon is modified to a tryptophan codon and gives rise to the large delta antigen protein (AC P0C6M2). S-HDAg suppresses editing of non-replicating antigenomic RNA, thereby regulating the extent of editing (By similarity).</text>
</comment>
<comment type="miscellaneous">
    <text>This strain belongs to the genotype I found in North America, Europe, Africa, East and West Asia and the South Pacific.</text>
</comment>
<comment type="similarity">
    <text evidence="7">Belongs to the hepatitis delta antigen family.</text>
</comment>
<accession>P25880</accession>
<evidence type="ECO:0000250" key="1"/>
<evidence type="ECO:0000250" key="2">
    <source>
        <dbReference type="UniProtKB" id="P0C6L3"/>
    </source>
</evidence>
<evidence type="ECO:0000255" key="3"/>
<evidence type="ECO:0000255" key="4">
    <source>
        <dbReference type="PROSITE-ProRule" id="PRU01183"/>
    </source>
</evidence>
<evidence type="ECO:0000256" key="5">
    <source>
        <dbReference type="SAM" id="MobiDB-lite"/>
    </source>
</evidence>
<evidence type="ECO:0000269" key="6">
    <source>
    </source>
</evidence>
<evidence type="ECO:0000305" key="7"/>
<proteinExistence type="inferred from homology"/>
<feature type="chain" id="PRO_0000038141" description="Small delta antigen">
    <location>
        <begin position="1"/>
        <end position="195"/>
    </location>
</feature>
<feature type="domain" description="HDAg" evidence="4">
    <location>
        <begin position="20"/>
        <end position="195"/>
    </location>
</feature>
<feature type="region of interest" description="Dimerization" evidence="3">
    <location>
        <begin position="12"/>
        <end position="60"/>
    </location>
</feature>
<feature type="region of interest" description="Disordered" evidence="5">
    <location>
        <begin position="38"/>
        <end position="195"/>
    </location>
</feature>
<feature type="region of interest" description="RNA-binding" evidence="4">
    <location>
        <begin position="97"/>
        <end position="107"/>
    </location>
</feature>
<feature type="region of interest" description="RNAPII-binding" evidence="4">
    <location>
        <begin position="130"/>
        <end position="195"/>
    </location>
</feature>
<feature type="region of interest" description="RNA-binding" evidence="4">
    <location>
        <begin position="136"/>
        <end position="146"/>
    </location>
</feature>
<feature type="short sequence motif" description="Nuclear localization signal" evidence="2">
    <location>
        <begin position="66"/>
        <end position="75"/>
    </location>
</feature>
<feature type="compositionally biased region" description="Basic and acidic residues" evidence="5">
    <location>
        <begin position="74"/>
        <end position="85"/>
    </location>
</feature>
<feature type="compositionally biased region" description="Basic and acidic residues" evidence="5">
    <location>
        <begin position="94"/>
        <end position="112"/>
    </location>
</feature>
<feature type="compositionally biased region" description="Basic and acidic residues" evidence="5">
    <location>
        <begin position="129"/>
        <end position="144"/>
    </location>
</feature>
<feature type="compositionally biased region" description="Gly residues" evidence="5">
    <location>
        <begin position="158"/>
        <end position="167"/>
    </location>
</feature>
<feature type="compositionally biased region" description="Basic and acidic residues" evidence="5">
    <location>
        <begin position="184"/>
        <end position="195"/>
    </location>
</feature>
<feature type="modified residue" description="Phosphoserine; by host CK2" evidence="2">
    <location>
        <position position="2"/>
    </location>
</feature>
<feature type="modified residue" description="Omega-N-methylated arginine; by host PRMT1" evidence="2">
    <location>
        <position position="13"/>
    </location>
</feature>
<feature type="modified residue" description="N6-acetyllysine; by host" evidence="2">
    <location>
        <position position="72"/>
    </location>
</feature>
<feature type="modified residue" description="Phosphoserine; by host" evidence="2">
    <location>
        <position position="123"/>
    </location>
</feature>
<feature type="modified residue" description="Phosphoserine; by host MAPK1 and MAPK3" evidence="2">
    <location>
        <position position="177"/>
    </location>
</feature>
<feature type="modified residue" description="Phosphothreonine; by host" evidence="2">
    <location>
        <position position="182"/>
    </location>
</feature>
<organism>
    <name type="scientific">Hepatitis delta virus genotype I (isolate Nauru)</name>
    <name type="common">HDV</name>
    <dbReference type="NCBI Taxonomy" id="10426"/>
    <lineage>
        <taxon>Viruses</taxon>
        <taxon>Ribozyviria</taxon>
        <taxon>Kolmioviridae</taxon>
        <taxon>Deltavirus</taxon>
        <taxon>Hepatitis delta virus</taxon>
    </lineage>
</organism>
<reference key="1">
    <citation type="journal article" date="1990" name="Virology">
        <title>Sequence conservation and divergence of hepatitis delta virus RNA.</title>
        <authorList>
            <person name="Chao Y.C."/>
            <person name="Chang M.F."/>
            <person name="Gust I."/>
            <person name="Lai M.M.C."/>
        </authorList>
    </citation>
    <scope>NUCLEOTIDE SEQUENCE [GENOMIC RNA]</scope>
    <scope>RNA EDITING</scope>
</reference>
<reference key="2">
    <citation type="journal article" date="2005" name="Acta Virol.">
        <title>Hepatitis D.</title>
        <authorList>
            <person name="Husa P."/>
            <person name="Linhartova A."/>
            <person name="Nemecek V."/>
            <person name="Husova L."/>
        </authorList>
    </citation>
    <scope>REVIEW</scope>
</reference>
<reference key="3">
    <citation type="journal article" date="2006" name="Curr. Top. Microbiol. Immunol.">
        <title>Post-translational modification of delta antigen of hepatitis D virus.</title>
        <authorList>
            <person name="Huang W.H."/>
            <person name="Chen C.W."/>
            <person name="Wu H.L."/>
            <person name="Chen P.J."/>
        </authorList>
    </citation>
    <scope>REVIEW</scope>
</reference>
<name>SHDAG_HDVNA</name>
<protein>
    <recommendedName>
        <fullName>Small delta antigen</fullName>
        <shortName>S-HDAg</shortName>
    </recommendedName>
    <alternativeName>
        <fullName>p24</fullName>
    </alternativeName>
</protein>
<organismHost>
    <name type="scientific">Homo sapiens</name>
    <name type="common">Human</name>
    <dbReference type="NCBI Taxonomy" id="9606"/>
</organismHost>
<keyword id="KW-0007">Acetylation</keyword>
<keyword id="KW-1048">Host nucleus</keyword>
<keyword id="KW-0945">Host-virus interaction</keyword>
<keyword id="KW-0488">Methylation</keyword>
<keyword id="KW-0597">Phosphoprotein</keyword>
<keyword id="KW-0691">RNA editing</keyword>
<keyword id="KW-0694">RNA-binding</keyword>
<keyword id="KW-1163">Viral penetration into host nucleus</keyword>
<keyword id="KW-0946">Virion</keyword>
<keyword id="KW-1160">Virus entry into host cell</keyword>
<dbReference type="EMBL" id="M58629">
    <property type="protein sequence ID" value="AAB59753.1"/>
    <property type="status" value="ALT_TERM"/>
    <property type="molecule type" value="Genomic_RNA"/>
</dbReference>
<dbReference type="PIR" id="A36212">
    <property type="entry name" value="SAVLDN"/>
</dbReference>
<dbReference type="SMR" id="P25880"/>
<dbReference type="Proteomes" id="UP000008109">
    <property type="component" value="Genome"/>
</dbReference>
<dbReference type="GO" id="GO:0043657">
    <property type="term" value="C:host cell"/>
    <property type="evidence" value="ECO:0007669"/>
    <property type="project" value="GOC"/>
</dbReference>
<dbReference type="GO" id="GO:0042025">
    <property type="term" value="C:host cell nucleus"/>
    <property type="evidence" value="ECO:0007669"/>
    <property type="project" value="UniProtKB-SubCell"/>
</dbReference>
<dbReference type="GO" id="GO:0044423">
    <property type="term" value="C:virion component"/>
    <property type="evidence" value="ECO:0007669"/>
    <property type="project" value="UniProtKB-KW"/>
</dbReference>
<dbReference type="GO" id="GO:0003723">
    <property type="term" value="F:RNA binding"/>
    <property type="evidence" value="ECO:0007669"/>
    <property type="project" value="UniProtKB-KW"/>
</dbReference>
<dbReference type="GO" id="GO:0046718">
    <property type="term" value="P:symbiont entry into host cell"/>
    <property type="evidence" value="ECO:0007669"/>
    <property type="project" value="UniProtKB-KW"/>
</dbReference>
<dbReference type="GO" id="GO:0075732">
    <property type="term" value="P:viral penetration into host nucleus"/>
    <property type="evidence" value="ECO:0007669"/>
    <property type="project" value="UniProtKB-KW"/>
</dbReference>
<dbReference type="Gene3D" id="4.10.220.40">
    <property type="entry name" value="Delta antigen, N-terminal"/>
    <property type="match status" value="1"/>
</dbReference>
<dbReference type="InterPro" id="IPR027403">
    <property type="entry name" value="Delta_antigen_N"/>
</dbReference>
<dbReference type="InterPro" id="IPR037517">
    <property type="entry name" value="HDAG_dom"/>
</dbReference>
<dbReference type="InterPro" id="IPR002506">
    <property type="entry name" value="HDV_ag"/>
</dbReference>
<dbReference type="Pfam" id="PF01517">
    <property type="entry name" value="HDV_ag"/>
    <property type="match status" value="1"/>
</dbReference>
<dbReference type="SUPFAM" id="SSF58108">
    <property type="entry name" value="Oligomerization domain of hepatitis delta antigen"/>
    <property type="match status" value="1"/>
</dbReference>
<dbReference type="PROSITE" id="PS51838">
    <property type="entry name" value="HDAG"/>
    <property type="match status" value="1"/>
</dbReference>